<accession>A4SEQ7</accession>
<proteinExistence type="inferred from homology"/>
<dbReference type="EC" id="2.7.4.3" evidence="1"/>
<dbReference type="EMBL" id="CP000607">
    <property type="protein sequence ID" value="ABP36966.1"/>
    <property type="molecule type" value="Genomic_DNA"/>
</dbReference>
<dbReference type="SMR" id="A4SEQ7"/>
<dbReference type="STRING" id="290318.Cvib_0952"/>
<dbReference type="KEGG" id="pvi:Cvib_0952"/>
<dbReference type="eggNOG" id="COG0563">
    <property type="taxonomic scope" value="Bacteria"/>
</dbReference>
<dbReference type="HOGENOM" id="CLU_032354_1_2_10"/>
<dbReference type="OrthoDB" id="9805030at2"/>
<dbReference type="UniPathway" id="UPA00588">
    <property type="reaction ID" value="UER00649"/>
</dbReference>
<dbReference type="GO" id="GO:0005737">
    <property type="term" value="C:cytoplasm"/>
    <property type="evidence" value="ECO:0007669"/>
    <property type="project" value="UniProtKB-SubCell"/>
</dbReference>
<dbReference type="GO" id="GO:0004017">
    <property type="term" value="F:adenylate kinase activity"/>
    <property type="evidence" value="ECO:0007669"/>
    <property type="project" value="UniProtKB-UniRule"/>
</dbReference>
<dbReference type="GO" id="GO:0005524">
    <property type="term" value="F:ATP binding"/>
    <property type="evidence" value="ECO:0007669"/>
    <property type="project" value="UniProtKB-UniRule"/>
</dbReference>
<dbReference type="GO" id="GO:0044209">
    <property type="term" value="P:AMP salvage"/>
    <property type="evidence" value="ECO:0007669"/>
    <property type="project" value="UniProtKB-UniRule"/>
</dbReference>
<dbReference type="CDD" id="cd01428">
    <property type="entry name" value="ADK"/>
    <property type="match status" value="1"/>
</dbReference>
<dbReference type="FunFam" id="3.40.50.300:FF:000106">
    <property type="entry name" value="Adenylate kinase mitochondrial"/>
    <property type="match status" value="1"/>
</dbReference>
<dbReference type="Gene3D" id="3.40.50.300">
    <property type="entry name" value="P-loop containing nucleotide triphosphate hydrolases"/>
    <property type="match status" value="1"/>
</dbReference>
<dbReference type="HAMAP" id="MF_00235">
    <property type="entry name" value="Adenylate_kinase_Adk"/>
    <property type="match status" value="1"/>
</dbReference>
<dbReference type="InterPro" id="IPR006259">
    <property type="entry name" value="Adenyl_kin_sub"/>
</dbReference>
<dbReference type="InterPro" id="IPR000850">
    <property type="entry name" value="Adenylat/UMP-CMP_kin"/>
</dbReference>
<dbReference type="InterPro" id="IPR033690">
    <property type="entry name" value="Adenylat_kinase_CS"/>
</dbReference>
<dbReference type="InterPro" id="IPR007862">
    <property type="entry name" value="Adenylate_kinase_lid-dom"/>
</dbReference>
<dbReference type="InterPro" id="IPR027417">
    <property type="entry name" value="P-loop_NTPase"/>
</dbReference>
<dbReference type="NCBIfam" id="TIGR01351">
    <property type="entry name" value="adk"/>
    <property type="match status" value="1"/>
</dbReference>
<dbReference type="NCBIfam" id="NF001379">
    <property type="entry name" value="PRK00279.1-1"/>
    <property type="match status" value="1"/>
</dbReference>
<dbReference type="NCBIfam" id="NF001380">
    <property type="entry name" value="PRK00279.1-2"/>
    <property type="match status" value="1"/>
</dbReference>
<dbReference type="NCBIfam" id="NF001381">
    <property type="entry name" value="PRK00279.1-3"/>
    <property type="match status" value="1"/>
</dbReference>
<dbReference type="NCBIfam" id="NF011100">
    <property type="entry name" value="PRK14527.1"/>
    <property type="match status" value="1"/>
</dbReference>
<dbReference type="PANTHER" id="PTHR23359">
    <property type="entry name" value="NUCLEOTIDE KINASE"/>
    <property type="match status" value="1"/>
</dbReference>
<dbReference type="Pfam" id="PF00406">
    <property type="entry name" value="ADK"/>
    <property type="match status" value="1"/>
</dbReference>
<dbReference type="Pfam" id="PF05191">
    <property type="entry name" value="ADK_lid"/>
    <property type="match status" value="1"/>
</dbReference>
<dbReference type="PRINTS" id="PR00094">
    <property type="entry name" value="ADENYLTKNASE"/>
</dbReference>
<dbReference type="SUPFAM" id="SSF52540">
    <property type="entry name" value="P-loop containing nucleoside triphosphate hydrolases"/>
    <property type="match status" value="1"/>
</dbReference>
<dbReference type="PROSITE" id="PS00113">
    <property type="entry name" value="ADENYLATE_KINASE"/>
    <property type="match status" value="1"/>
</dbReference>
<gene>
    <name evidence="1" type="primary">adk</name>
    <name type="ordered locus">Cvib_0952</name>
</gene>
<keyword id="KW-0067">ATP-binding</keyword>
<keyword id="KW-0963">Cytoplasm</keyword>
<keyword id="KW-0418">Kinase</keyword>
<keyword id="KW-0545">Nucleotide biosynthesis</keyword>
<keyword id="KW-0547">Nucleotide-binding</keyword>
<keyword id="KW-0808">Transferase</keyword>
<comment type="function">
    <text evidence="1">Catalyzes the reversible transfer of the terminal phosphate group between ATP and AMP. Plays an important role in cellular energy homeostasis and in adenine nucleotide metabolism.</text>
</comment>
<comment type="catalytic activity">
    <reaction evidence="1">
        <text>AMP + ATP = 2 ADP</text>
        <dbReference type="Rhea" id="RHEA:12973"/>
        <dbReference type="ChEBI" id="CHEBI:30616"/>
        <dbReference type="ChEBI" id="CHEBI:456215"/>
        <dbReference type="ChEBI" id="CHEBI:456216"/>
        <dbReference type="EC" id="2.7.4.3"/>
    </reaction>
</comment>
<comment type="pathway">
    <text evidence="1">Purine metabolism; AMP biosynthesis via salvage pathway; AMP from ADP: step 1/1.</text>
</comment>
<comment type="subunit">
    <text evidence="1">Monomer.</text>
</comment>
<comment type="subcellular location">
    <subcellularLocation>
        <location evidence="1">Cytoplasm</location>
    </subcellularLocation>
</comment>
<comment type="domain">
    <text evidence="1">Consists of three domains, a large central CORE domain and two small peripheral domains, NMPbind and LID, which undergo movements during catalysis. The LID domain closes over the site of phosphoryl transfer upon ATP binding. Assembling and dissambling the active center during each catalytic cycle provides an effective means to prevent ATP hydrolysis.</text>
</comment>
<comment type="similarity">
    <text evidence="1">Belongs to the adenylate kinase family.</text>
</comment>
<reference key="1">
    <citation type="submission" date="2007-03" db="EMBL/GenBank/DDBJ databases">
        <title>Complete sequence of Prosthecochloris vibrioformis DSM 265.</title>
        <authorList>
            <consortium name="US DOE Joint Genome Institute"/>
            <person name="Copeland A."/>
            <person name="Lucas S."/>
            <person name="Lapidus A."/>
            <person name="Barry K."/>
            <person name="Detter J.C."/>
            <person name="Glavina del Rio T."/>
            <person name="Hammon N."/>
            <person name="Israni S."/>
            <person name="Pitluck S."/>
            <person name="Schmutz J."/>
            <person name="Larimer F."/>
            <person name="Land M."/>
            <person name="Hauser L."/>
            <person name="Mikhailova N."/>
            <person name="Li T."/>
            <person name="Overmann J."/>
            <person name="Schuster S.C."/>
            <person name="Bryant D.A."/>
            <person name="Richardson P."/>
        </authorList>
    </citation>
    <scope>NUCLEOTIDE SEQUENCE [LARGE SCALE GENOMIC DNA]</scope>
    <source>
        <strain>DSM 265 / 1930</strain>
    </source>
</reference>
<protein>
    <recommendedName>
        <fullName evidence="1">Adenylate kinase</fullName>
        <shortName evidence="1">AK</shortName>
        <ecNumber evidence="1">2.7.4.3</ecNumber>
    </recommendedName>
    <alternativeName>
        <fullName evidence="1">ATP-AMP transphosphorylase</fullName>
    </alternativeName>
    <alternativeName>
        <fullName evidence="1">ATP:AMP phosphotransferase</fullName>
    </alternativeName>
    <alternativeName>
        <fullName evidence="1">Adenylate monophosphate kinase</fullName>
    </alternativeName>
</protein>
<evidence type="ECO:0000255" key="1">
    <source>
        <dbReference type="HAMAP-Rule" id="MF_00235"/>
    </source>
</evidence>
<organism>
    <name type="scientific">Chlorobium phaeovibrioides (strain DSM 265 / 1930)</name>
    <name type="common">Prosthecochloris vibrioformis (strain DSM 265)</name>
    <dbReference type="NCBI Taxonomy" id="290318"/>
    <lineage>
        <taxon>Bacteria</taxon>
        <taxon>Pseudomonadati</taxon>
        <taxon>Chlorobiota</taxon>
        <taxon>Chlorobiia</taxon>
        <taxon>Chlorobiales</taxon>
        <taxon>Chlorobiaceae</taxon>
        <taxon>Chlorobium/Pelodictyon group</taxon>
        <taxon>Chlorobium</taxon>
    </lineage>
</organism>
<name>KAD_CHLPM</name>
<feature type="chain" id="PRO_1000078285" description="Adenylate kinase">
    <location>
        <begin position="1"/>
        <end position="218"/>
    </location>
</feature>
<feature type="region of interest" description="NMP" evidence="1">
    <location>
        <begin position="30"/>
        <end position="59"/>
    </location>
</feature>
<feature type="region of interest" description="LID" evidence="1">
    <location>
        <begin position="122"/>
        <end position="159"/>
    </location>
</feature>
<feature type="binding site" evidence="1">
    <location>
        <begin position="10"/>
        <end position="15"/>
    </location>
    <ligand>
        <name>ATP</name>
        <dbReference type="ChEBI" id="CHEBI:30616"/>
    </ligand>
</feature>
<feature type="binding site" evidence="1">
    <location>
        <position position="31"/>
    </location>
    <ligand>
        <name>AMP</name>
        <dbReference type="ChEBI" id="CHEBI:456215"/>
    </ligand>
</feature>
<feature type="binding site" evidence="1">
    <location>
        <position position="36"/>
    </location>
    <ligand>
        <name>AMP</name>
        <dbReference type="ChEBI" id="CHEBI:456215"/>
    </ligand>
</feature>
<feature type="binding site" evidence="1">
    <location>
        <begin position="57"/>
        <end position="59"/>
    </location>
    <ligand>
        <name>AMP</name>
        <dbReference type="ChEBI" id="CHEBI:456215"/>
    </ligand>
</feature>
<feature type="binding site" evidence="1">
    <location>
        <begin position="85"/>
        <end position="88"/>
    </location>
    <ligand>
        <name>AMP</name>
        <dbReference type="ChEBI" id="CHEBI:456215"/>
    </ligand>
</feature>
<feature type="binding site" evidence="1">
    <location>
        <position position="92"/>
    </location>
    <ligand>
        <name>AMP</name>
        <dbReference type="ChEBI" id="CHEBI:456215"/>
    </ligand>
</feature>
<feature type="binding site" evidence="1">
    <location>
        <position position="123"/>
    </location>
    <ligand>
        <name>ATP</name>
        <dbReference type="ChEBI" id="CHEBI:30616"/>
    </ligand>
</feature>
<feature type="binding site" evidence="1">
    <location>
        <begin position="132"/>
        <end position="133"/>
    </location>
    <ligand>
        <name>ATP</name>
        <dbReference type="ChEBI" id="CHEBI:30616"/>
    </ligand>
</feature>
<feature type="binding site" evidence="1">
    <location>
        <position position="156"/>
    </location>
    <ligand>
        <name>AMP</name>
        <dbReference type="ChEBI" id="CHEBI:456215"/>
    </ligand>
</feature>
<feature type="binding site" evidence="1">
    <location>
        <position position="167"/>
    </location>
    <ligand>
        <name>AMP</name>
        <dbReference type="ChEBI" id="CHEBI:456215"/>
    </ligand>
</feature>
<feature type="binding site" evidence="1">
    <location>
        <position position="203"/>
    </location>
    <ligand>
        <name>ATP</name>
        <dbReference type="ChEBI" id="CHEBI:30616"/>
    </ligand>
</feature>
<sequence>MRIILLGAPGAGKGTQSHFISKALGIPQISTGDMLRAAVKEETPLGRKAKEVMDSGNLVSDDIILDIIKERLKEDDCRSGCLFDGFPRTIAQAEALDREGITINHVIEIRVEDSSIIQRMSGRRVHPASGRTYHLTFNPPQQQGVDDETGEPLIQRVDDTEETVKKRLAIYHEQTSPLIEYYTGRAAEGSLDSPRFTTVEGTGKVEEIRDRILKALGA</sequence>